<sequence length="1057" mass="94612">QLSYGYDEKSAGGISVPGPMGPSGPRGLPGPPGAPGPQGFQGPPGEPGEPGASGPMGPRGPPGPPGKNGDDGEAGKPGRPGERGPPGPQGARGLPGTAGLPGMKGHRGFSGLDGAKGDAGPAGPKGEPGSPGENGAPGQMGPRGLPGERGRPGAPGPAGARGNDGATGAAGPPGPTGPAGPPGFPGAVGAKGEAGPQGARGSEGPQGVRGEPGPPGPAGAAGPAGNPGADGQPGAKGANGAPGIAGAPGFPGARGPAGPQGPSGAPGPKGNSGEPGAPGSKGDAGAKGEPGPIGIQGPPGPAGEEGKRGARGEPGPTGLPGPPGERGGPGSRGFPGADGVAGPKGPAGERGSPGPAGPKGSPGEAGRPGEAGLPGAKGLTGSPGSPGPDGKTGPPGPAGQDGRPGPPGPPGARGQAGVMGFPGPKGAAGEPGKAGERGVPGPPGAVGAAGKDGEAGAQGPPGPAGPAGERGEQGPAGSPGFQGLPGPAGPPGEAGKPGEQGVPGDLGAPGPSGARGERGFPGERGVQGPPGPAGPRGSNGAPGNDGAKGDAGAPGAPGSQGAPGLQGMPGERGAAGLPGPKGDRGDAGPKGADGSPGKDGPRGLTGPIGPPGPAGAPGDKGEAGPSGPAGPTGARGAPGDRGEPGPPGPAGFAGPPGADGQPGAKGEPGDAGAKGDAGPPGPAGPTGAPGPIGNVGAPGAKGARGSAGPPGATGFPGAAGRVGPPGPSGNAGPPGPPGPAGKEGGKGPRGETGPAGRPGEVGPPGPPGPAGEKGSPGADGPAGAPGTPGPQGIGGQRGVVGLPGQRGERGFPGLPGPSGEPGKQGPSGSSGERGPPGPAGPPGLAGPPGESGREGAPGAEGSPGRDGSPGPKGDRGETGPSGPPGAPGAPGAPGPVGPAGKSGDRGETGPAGPAGPAGPAGVRGPAGPQGPRGDKGETGEQGDRGLKGHRGFSGLQGPPGPPGSPGEQGPSGASGPAGPRGPPGSAGAPGKDGLNGLPGPPGPPGPRGRTGDAGPVGPPGPPGPPGPPGPPSGAFDFSFLPQPPQEKAHDGGRYYRA</sequence>
<keyword id="KW-0176">Collagen</keyword>
<keyword id="KW-0903">Direct protein sequencing</keyword>
<keyword id="KW-0952">Extinct organism protein</keyword>
<keyword id="KW-0272">Extracellular matrix</keyword>
<keyword id="KW-0325">Glycoprotein</keyword>
<keyword id="KW-0379">Hydroxylation</keyword>
<keyword id="KW-0597">Phosphoprotein</keyword>
<keyword id="KW-0873">Pyrrolidone carboxylic acid</keyword>
<keyword id="KW-0677">Repeat</keyword>
<keyword id="KW-0964">Secreted</keyword>
<comment type="function">
    <text>Type I collagen is a member of group I collagen (fibrillar forming collagen).</text>
</comment>
<comment type="subunit">
    <text>Trimers of one alpha 2(I) and two alpha 1(I) chains.</text>
</comment>
<comment type="subcellular location">
    <subcellularLocation>
        <location evidence="1">Secreted</location>
        <location evidence="1">Extracellular space</location>
        <location evidence="1">Extracellular matrix</location>
    </subcellularLocation>
</comment>
<comment type="PTM">
    <text evidence="8">Contains mostly 4-hydroxyproline. Proline residues at the third position of the tripeptide repeating unit (G-X-Y) are hydroxylated in some or all of the chains.</text>
</comment>
<comment type="PTM">
    <text evidence="6">Contains 3-hydroxyproline at a few sites. This modification occurs on the first proline residue in the sequence motif Gly-Pro-Hyp, where Hyp is 4-hydroxyproline.</text>
</comment>
<comment type="PTM">
    <text evidence="5">Lysine residues at the third position of the tripeptide repeating unit (G-X-Y) are 5-hydroxylated in some or all of the chains.</text>
</comment>
<comment type="PTM">
    <text evidence="6">O-glycosylated on hydroxylated lysine residues. The O-linked glycan consists of a Glc-Gal disaccharide.</text>
</comment>
<comment type="miscellaneous">
    <text>This protein sequence was reconstructed from 13,800 and 160,000 to 600,000 year old bones. The tryptic peptides required multiple purification steps in order to eliminate contaminants and to increase the concentration of peptidic material.</text>
</comment>
<comment type="similarity">
    <text evidence="9">Belongs to the fibrillar collagen family.</text>
</comment>
<proteinExistence type="evidence at protein level"/>
<name>CO1A1_MAMAE</name>
<organism>
    <name type="scientific">Mammut americanum</name>
    <name type="common">American mastodon</name>
    <dbReference type="NCBI Taxonomy" id="39053"/>
    <lineage>
        <taxon>Eukaryota</taxon>
        <taxon>Metazoa</taxon>
        <taxon>Chordata</taxon>
        <taxon>Craniata</taxon>
        <taxon>Vertebrata</taxon>
        <taxon>Euteleostomi</taxon>
        <taxon>Mammalia</taxon>
        <taxon>Eutheria</taxon>
        <taxon>Afrotheria</taxon>
        <taxon>Proboscidea</taxon>
        <taxon>Elephantidae</taxon>
        <taxon>Mammut</taxon>
    </lineage>
</organism>
<gene>
    <name type="primary">COL1A1</name>
</gene>
<evidence type="ECO:0000250" key="1"/>
<evidence type="ECO:0000250" key="2">
    <source>
        <dbReference type="UniProtKB" id="P02452"/>
    </source>
</evidence>
<evidence type="ECO:0000250" key="3">
    <source>
        <dbReference type="UniProtKB" id="P02453"/>
    </source>
</evidence>
<evidence type="ECO:0000250" key="4">
    <source>
        <dbReference type="UniProtKB" id="P02454"/>
    </source>
</evidence>
<evidence type="ECO:0000250" key="5">
    <source>
        <dbReference type="UniProtKB" id="P02457"/>
    </source>
</evidence>
<evidence type="ECO:0000250" key="6">
    <source>
        <dbReference type="UniProtKB" id="P11087"/>
    </source>
</evidence>
<evidence type="ECO:0000256" key="7">
    <source>
        <dbReference type="SAM" id="MobiDB-lite"/>
    </source>
</evidence>
<evidence type="ECO:0000269" key="8">
    <source ref="3"/>
</evidence>
<evidence type="ECO:0000305" key="9"/>
<reference key="1">
    <citation type="journal article" date="2011" name="Science">
        <title>Pre-Clovis mastodon hunting 13,800 years ago at the Manis site, Washington.</title>
        <authorList>
            <person name="Waters M.R."/>
            <person name="Stafford T.W. Jr."/>
            <person name="McDonald H.G."/>
            <person name="Gustafson C."/>
            <person name="Rasmussen M."/>
            <person name="Cappellini E."/>
            <person name="Olsen J.V."/>
            <person name="Szklarczyk D."/>
            <person name="Jensen L.J."/>
            <person name="Gilbert M.T."/>
            <person name="Willerslev E."/>
        </authorList>
    </citation>
    <scope>PROTEIN SEQUENCE</scope>
    <source>
        <tissue>Bone</tissue>
    </source>
</reference>
<reference key="2">
    <citation type="journal article" date="2008" name="Science">
        <title>Molecular phylogenetics of mastodon and Tyrannosaurus rex.</title>
        <authorList>
            <person name="Organ C.L."/>
            <person name="Schweitzer M.H."/>
            <person name="Zheng W."/>
            <person name="Freimark L.M."/>
            <person name="Cantley L.C."/>
            <person name="Asara J.M."/>
        </authorList>
    </citation>
    <scope>PROTEIN SEQUENCE OF 60-85; 88-98; 108-142; 161-307; 311-325; 332-433; 438-467; 522-536; 549-662; 672-701; 705-721; 747-774; 798-805; 809-832; 853-946; 951-1007 AND 1010-1031</scope>
    <source>
        <tissue>Bone</tissue>
    </source>
</reference>
<reference key="3">
    <citation type="submission" date="2007-09" db="UniProtKB">
        <authorList>
            <person name="Asara J.M."/>
        </authorList>
    </citation>
    <scope>PROTEIN SEQUENCE OF 108-116; 126-143; 150-191; 201-269; 282-308; 312-326; 333-391; 414-425; 525-536; 603-635; 705-742; 750-773; 810-823; 854-872; 876-932; 951-980 AND 992-1007</scope>
    <scope>IDENTIFICATION BY MASS SPECTROMETRY</scope>
    <scope>HYDROXYLATION AT PRO-128; PRO-131; PRO-173; PRO-182; PRO-185; PRO-212; PRO-215; PRO-227; PRO-242; PRO-248; PRO-251; PRO-266; PRO-290; PRO-292; PRO-299; PRO-314; PRO-320; PRO-323; PRO-335; PRO-362; PRO-368; PRO-374; PRO-383; PRO-386; PRO-422; PRO-530; PRO-611; PRO-617; PRO-710; PRO-716; PRO-758; PRO-764; PRO-767; PRO-812; PRO-815; PRO-863; PRO-869; PRO-887; PRO-890; PRO-959; PRO-962; PRO-965; PRO-998; PRO-1001 AND PRO-1004</scope>
    <source>
        <tissue>Bone</tissue>
    </source>
</reference>
<reference key="4">
    <citation type="journal article" date="2007" name="Science">
        <title>Protein sequences from Mastodon and Tyrannosaurus rex revealed by mass spectrometry.</title>
        <authorList>
            <person name="Asara J.M."/>
            <person name="Schweitzer M.H."/>
            <person name="Freimark L.M."/>
            <person name="Phillips M."/>
            <person name="Cantley L.C."/>
        </authorList>
    </citation>
    <scope>PROTEIN SEQUENCE OF 201-209; 255-269; 603-635 AND 854-872</scope>
    <scope>IDENTIFICATION BY MASS SPECTROMETRY</scope>
    <source>
        <tissue>Bone</tissue>
    </source>
</reference>
<reference key="5">
    <citation type="journal article" date="2007" name="Science">
        <title>Interpreting sequences from mastodon and T. rex.</title>
        <authorList>
            <person name="Asara J.M."/>
            <person name="Garavelli J.S."/>
            <person name="Slatter D.A."/>
            <person name="Schweitzer M.H."/>
            <person name="Freimark L.M."/>
            <person name="Phillips M."/>
            <person name="Cantley L.C."/>
        </authorList>
    </citation>
    <scope>COMMENTS ON INTERPRETATION OF POTENTIAL HYDROXYLATION SITES</scope>
</reference>
<dbReference type="GlyCosmos" id="P0C2W8">
    <property type="glycosylation" value="2 sites, No reported glycans"/>
</dbReference>
<dbReference type="GO" id="GO:0005581">
    <property type="term" value="C:collagen trimer"/>
    <property type="evidence" value="ECO:0007669"/>
    <property type="project" value="UniProtKB-KW"/>
</dbReference>
<dbReference type="GO" id="GO:0005576">
    <property type="term" value="C:extracellular region"/>
    <property type="evidence" value="ECO:0007669"/>
    <property type="project" value="UniProtKB-KW"/>
</dbReference>
<dbReference type="InterPro" id="IPR008160">
    <property type="entry name" value="Collagen"/>
</dbReference>
<dbReference type="InterPro" id="IPR050938">
    <property type="entry name" value="Collagen_Structural_Proteins"/>
</dbReference>
<dbReference type="PANTHER" id="PTHR37456:SF6">
    <property type="entry name" value="COLLAGEN ALPHA-1(XXIII) CHAIN-LIKE ISOFORM X2"/>
    <property type="match status" value="1"/>
</dbReference>
<dbReference type="PANTHER" id="PTHR37456">
    <property type="entry name" value="SI:CH211-266K2.1"/>
    <property type="match status" value="1"/>
</dbReference>
<dbReference type="Pfam" id="PF01391">
    <property type="entry name" value="Collagen"/>
    <property type="match status" value="11"/>
</dbReference>
<feature type="chain" id="PRO_0000287477" description="Collagen alpha-1(I) chain">
    <location>
        <begin position="1"/>
        <end position="1057"/>
    </location>
</feature>
<feature type="domain" description="Collagen-like 1">
    <location>
        <begin position="18"/>
        <end position="76"/>
    </location>
</feature>
<feature type="domain" description="Collagen-like 2">
    <location>
        <begin position="75"/>
        <end position="134"/>
    </location>
</feature>
<feature type="domain" description="Collagen-like 3">
    <location>
        <begin position="135"/>
        <end position="193"/>
    </location>
</feature>
<feature type="domain" description="Collagen-like 4">
    <location>
        <begin position="195"/>
        <end position="252"/>
    </location>
</feature>
<feature type="domain" description="Collagen-like 5">
    <location>
        <begin position="522"/>
        <end position="579"/>
    </location>
</feature>
<feature type="domain" description="Collagen-like 6">
    <location>
        <begin position="555"/>
        <end position="613"/>
    </location>
</feature>
<feature type="domain" description="Collagen-like 7">
    <location>
        <begin position="618"/>
        <end position="676"/>
    </location>
</feature>
<feature type="domain" description="Collagen-like 8">
    <location>
        <begin position="678"/>
        <end position="736"/>
    </location>
</feature>
<feature type="domain" description="Collagen-like 9">
    <location>
        <begin position="804"/>
        <end position="861"/>
    </location>
</feature>
<feature type="domain" description="Collagen-like 10">
    <location>
        <begin position="918"/>
        <end position="976"/>
    </location>
</feature>
<feature type="domain" description="Collagen-like 11">
    <location>
        <begin position="972"/>
        <end position="1030"/>
    </location>
</feature>
<feature type="region of interest" description="Disordered" evidence="7">
    <location>
        <begin position="1"/>
        <end position="1057"/>
    </location>
</feature>
<feature type="region of interest" description="Nonhelical region (N-terminal)">
    <location>
        <begin position="1"/>
        <end position="17"/>
    </location>
</feature>
<feature type="region of interest" description="Triple-helical region">
    <location>
        <begin position="18"/>
        <end position="1031"/>
    </location>
</feature>
<feature type="region of interest" description="Nonhelical region (C-terminal)">
    <location>
        <begin position="1032"/>
        <end position="1055"/>
    </location>
</feature>
<feature type="compositionally biased region" description="Basic and acidic residues" evidence="7">
    <location>
        <begin position="1"/>
        <end position="10"/>
    </location>
</feature>
<feature type="compositionally biased region" description="Low complexity" evidence="7">
    <location>
        <begin position="37"/>
        <end position="56"/>
    </location>
</feature>
<feature type="compositionally biased region" description="Basic and acidic residues" evidence="7">
    <location>
        <begin position="68"/>
        <end position="82"/>
    </location>
</feature>
<feature type="compositionally biased region" description="Low complexity" evidence="7">
    <location>
        <begin position="118"/>
        <end position="134"/>
    </location>
</feature>
<feature type="compositionally biased region" description="Low complexity" evidence="7">
    <location>
        <begin position="157"/>
        <end position="170"/>
    </location>
</feature>
<feature type="compositionally biased region" description="Pro residues" evidence="7">
    <location>
        <begin position="172"/>
        <end position="184"/>
    </location>
</feature>
<feature type="compositionally biased region" description="Low complexity" evidence="7">
    <location>
        <begin position="218"/>
        <end position="269"/>
    </location>
</feature>
<feature type="compositionally biased region" description="Low complexity" evidence="7">
    <location>
        <begin position="287"/>
        <end position="296"/>
    </location>
</feature>
<feature type="compositionally biased region" description="Gly residues" evidence="7">
    <location>
        <begin position="324"/>
        <end position="333"/>
    </location>
</feature>
<feature type="compositionally biased region" description="Low complexity" evidence="7">
    <location>
        <begin position="377"/>
        <end position="403"/>
    </location>
</feature>
<feature type="compositionally biased region" description="Low complexity" evidence="7">
    <location>
        <begin position="412"/>
        <end position="431"/>
    </location>
</feature>
<feature type="compositionally biased region" description="Low complexity" evidence="7">
    <location>
        <begin position="473"/>
        <end position="500"/>
    </location>
</feature>
<feature type="compositionally biased region" description="Low complexity" evidence="7">
    <location>
        <begin position="539"/>
        <end position="566"/>
    </location>
</feature>
<feature type="compositionally biased region" description="Low complexity" evidence="7">
    <location>
        <begin position="623"/>
        <end position="637"/>
    </location>
</feature>
<feature type="compositionally biased region" description="Low complexity" evidence="7">
    <location>
        <begin position="650"/>
        <end position="677"/>
    </location>
</feature>
<feature type="compositionally biased region" description="Low complexity" evidence="7">
    <location>
        <begin position="706"/>
        <end position="722"/>
    </location>
</feature>
<feature type="compositionally biased region" description="Low complexity" evidence="7">
    <location>
        <begin position="751"/>
        <end position="760"/>
    </location>
</feature>
<feature type="compositionally biased region" description="Low complexity" evidence="7">
    <location>
        <begin position="770"/>
        <end position="785"/>
    </location>
</feature>
<feature type="compositionally biased region" description="Gly residues" evidence="7">
    <location>
        <begin position="789"/>
        <end position="798"/>
    </location>
</feature>
<feature type="compositionally biased region" description="Pro residues" evidence="7">
    <location>
        <begin position="835"/>
        <end position="845"/>
    </location>
</feature>
<feature type="compositionally biased region" description="Pro residues" evidence="7">
    <location>
        <begin position="881"/>
        <end position="896"/>
    </location>
</feature>
<feature type="compositionally biased region" description="Low complexity" evidence="7">
    <location>
        <begin position="917"/>
        <end position="931"/>
    </location>
</feature>
<feature type="compositionally biased region" description="Basic and acidic residues" evidence="7">
    <location>
        <begin position="932"/>
        <end position="946"/>
    </location>
</feature>
<feature type="compositionally biased region" description="Low complexity" evidence="7">
    <location>
        <begin position="965"/>
        <end position="997"/>
    </location>
</feature>
<feature type="compositionally biased region" description="Pro residues" evidence="7">
    <location>
        <begin position="1016"/>
        <end position="1031"/>
    </location>
</feature>
<feature type="compositionally biased region" description="Basic and acidic residues" evidence="7">
    <location>
        <begin position="1046"/>
        <end position="1057"/>
    </location>
</feature>
<feature type="modified residue" description="Pyrrolidone carboxylic acid" evidence="3">
    <location>
        <position position="1"/>
    </location>
</feature>
<feature type="modified residue" description="Allysine" evidence="2">
    <location>
        <position position="9"/>
    </location>
</feature>
<feature type="modified residue" description="Phosphoserine" evidence="4">
    <location>
        <position position="10"/>
    </location>
</feature>
<feature type="modified residue" description="4-hydroxyproline" evidence="5">
    <location>
        <position position="29"/>
    </location>
</feature>
<feature type="modified residue" description="4-hydroxyproline" evidence="5">
    <location>
        <position position="32"/>
    </location>
</feature>
<feature type="modified residue" description="4-hydroxyproline" evidence="5">
    <location>
        <position position="35"/>
    </location>
</feature>
<feature type="modified residue" description="4-hydroxyproline" evidence="5">
    <location>
        <position position="44"/>
    </location>
</feature>
<feature type="modified residue" description="4-hydroxyproline" evidence="5">
    <location>
        <position position="47"/>
    </location>
</feature>
<feature type="modified residue" description="4-hydroxyproline" evidence="5">
    <location>
        <position position="50"/>
    </location>
</feature>
<feature type="modified residue" description="4-hydroxyproline" evidence="5">
    <location>
        <position position="65"/>
    </location>
</feature>
<feature type="modified residue" description="4-hydroxyproline" evidence="5">
    <location>
        <position position="80"/>
    </location>
</feature>
<feature type="modified residue" description="4-hydroxyproline" evidence="5">
    <location>
        <position position="86"/>
    </location>
</feature>
<feature type="modified residue" description="4-hydroxyproline" evidence="5">
    <location>
        <position position="95"/>
    </location>
</feature>
<feature type="modified residue" description="4-hydroxyproline" evidence="5">
    <location>
        <position position="101"/>
    </location>
</feature>
<feature type="modified residue" description="5-hydroxylysine; alternate" evidence="6">
    <location>
        <position position="104"/>
    </location>
</feature>
<feature type="modified residue" description="Phosphoserine" evidence="4">
    <location>
        <position position="110"/>
    </location>
</feature>
<feature type="modified residue" description="4-hydroxyproline" evidence="8">
    <location>
        <position position="128"/>
    </location>
</feature>
<feature type="modified residue" description="4-hydroxyproline" evidence="8">
    <location>
        <position position="131"/>
    </location>
</feature>
<feature type="modified residue" description="4-hydroxyproline" evidence="5">
    <location>
        <position position="137"/>
    </location>
</feature>
<feature type="modified residue" description="4-hydroxyproline" evidence="5">
    <location>
        <position position="146"/>
    </location>
</feature>
<feature type="modified residue" description="4-hydroxyproline" evidence="5">
    <location>
        <position position="152"/>
    </location>
</feature>
<feature type="modified residue" description="4-hydroxyproline" evidence="8">
    <location>
        <position position="173"/>
    </location>
</feature>
<feature type="modified residue" description="4-hydroxyproline" evidence="8">
    <location>
        <position position="182"/>
    </location>
</feature>
<feature type="modified residue" description="4-hydroxyproline" evidence="8">
    <location>
        <position position="185"/>
    </location>
</feature>
<feature type="modified residue" description="4-hydroxyproline" evidence="8">
    <location>
        <position position="212"/>
    </location>
</feature>
<feature type="modified residue" description="4-hydroxyproline" evidence="8">
    <location>
        <position position="215"/>
    </location>
</feature>
<feature type="modified residue" description="4-hydroxyproline" evidence="8">
    <location>
        <position position="227"/>
    </location>
</feature>
<feature type="modified residue" description="4-hydroxyproline" evidence="5">
    <location>
        <position position="233"/>
    </location>
</feature>
<feature type="modified residue" description="4-hydroxyproline" evidence="8">
    <location>
        <position position="242"/>
    </location>
</feature>
<feature type="modified residue" description="4-hydroxyproline" evidence="8">
    <location>
        <position position="248"/>
    </location>
</feature>
<feature type="modified residue" description="4-hydroxyproline" evidence="8">
    <location>
        <position position="251"/>
    </location>
</feature>
<feature type="modified residue" description="4-hydroxyproline" evidence="8">
    <location>
        <position position="266"/>
    </location>
</feature>
<feature type="modified residue" description="5-hydroxylysine" evidence="5">
    <location>
        <position position="269"/>
    </location>
</feature>
<feature type="modified residue" description="4-hydroxyproline" evidence="5">
    <location>
        <position position="275"/>
    </location>
</feature>
<feature type="modified residue" description="4-hydroxyproline" evidence="5">
    <location>
        <position position="278"/>
    </location>
</feature>
<feature type="modified residue" description="4-hydroxyproline" evidence="8">
    <location>
        <position position="290"/>
    </location>
</feature>
<feature type="modified residue" description="4-hydroxyproline" evidence="8">
    <location>
        <position position="292"/>
    </location>
</feature>
<feature type="modified residue" description="4-hydroxyproline" evidence="8">
    <location>
        <position position="299"/>
    </location>
</feature>
<feature type="modified residue" description="4-hydroxyproline" evidence="8">
    <location>
        <position position="314"/>
    </location>
</feature>
<feature type="modified residue" description="4-hydroxyproline" evidence="8">
    <location>
        <position position="320"/>
    </location>
</feature>
<feature type="modified residue" description="4-hydroxyproline" evidence="8">
    <location>
        <position position="323"/>
    </location>
</feature>
<feature type="modified residue" description="4-hydroxyproline" evidence="5">
    <location>
        <position position="329"/>
    </location>
</feature>
<feature type="modified residue" description="4-hydroxyproline" evidence="8">
    <location>
        <position position="335"/>
    </location>
</feature>
<feature type="modified residue" description="5-hydroxylysine" evidence="5">
    <location>
        <position position="344"/>
    </location>
</feature>
<feature type="modified residue" description="4-hydroxyproline" evidence="5">
    <location>
        <position position="353"/>
    </location>
</feature>
<feature type="modified residue" description="4-hydroxyproline" evidence="8">
    <location>
        <position position="362"/>
    </location>
</feature>
<feature type="modified residue" description="4-hydroxyproline" evidence="8">
    <location>
        <position position="368"/>
    </location>
</feature>
<feature type="modified residue" description="4-hydroxyproline" evidence="8">
    <location>
        <position position="374"/>
    </location>
</feature>
<feature type="modified residue" description="4-hydroxyproline" evidence="8">
    <location>
        <position position="383"/>
    </location>
</feature>
<feature type="modified residue" description="4-hydroxyproline" evidence="8">
    <location>
        <position position="386"/>
    </location>
</feature>
<feature type="modified residue" description="4-hydroxyproline" evidence="5">
    <location>
        <position position="395"/>
    </location>
</feature>
<feature type="modified residue" description="4-hydroxyproline" evidence="5">
    <location>
        <position position="404"/>
    </location>
</feature>
<feature type="modified residue" description="4-hydroxyproline" evidence="5">
    <location>
        <position position="410"/>
    </location>
</feature>
<feature type="modified residue" description="4-hydroxyproline" evidence="8">
    <location>
        <position position="422"/>
    </location>
</feature>
<feature type="modified residue" description="4-hydroxyproline" evidence="5">
    <location>
        <position position="431"/>
    </location>
</feature>
<feature type="modified residue" description="4-hydroxyproline" evidence="5">
    <location>
        <position position="440"/>
    </location>
</feature>
<feature type="modified residue" description="4-hydroxyproline" evidence="5">
    <location>
        <position position="443"/>
    </location>
</feature>
<feature type="modified residue" description="4-hydroxyproline" evidence="5">
    <location>
        <position position="461"/>
    </location>
</feature>
<feature type="modified residue" description="4-hydroxyproline" evidence="5">
    <location>
        <position position="479"/>
    </location>
</feature>
<feature type="modified residue" description="4-hydroxyproline" evidence="5">
    <location>
        <position position="485"/>
    </location>
</feature>
<feature type="modified residue" description="4-hydroxyproline" evidence="5">
    <location>
        <position position="491"/>
    </location>
</feature>
<feature type="modified residue" description="4-hydroxyproline" evidence="5">
    <location>
        <position position="497"/>
    </location>
</feature>
<feature type="modified residue" description="4-hydroxyproline" evidence="5">
    <location>
        <position position="503"/>
    </location>
</feature>
<feature type="modified residue" description="4-hydroxyproline" evidence="5">
    <location>
        <position position="509"/>
    </location>
</feature>
<feature type="modified residue" description="4-hydroxyproline" evidence="5">
    <location>
        <position position="521"/>
    </location>
</feature>
<feature type="modified residue" description="4-hydroxyproline" evidence="8">
    <location>
        <position position="530"/>
    </location>
</feature>
<feature type="modified residue" description="4-hydroxyproline" evidence="5">
    <location>
        <position position="542"/>
    </location>
</feature>
<feature type="modified residue" description="4-hydroxyproline" evidence="5">
    <location>
        <position position="554"/>
    </location>
</feature>
<feature type="modified residue" description="4-hydroxyproline" evidence="5">
    <location>
        <position position="557"/>
    </location>
</feature>
<feature type="modified residue" description="4-hydroxyproline" evidence="5">
    <location>
        <position position="563"/>
    </location>
</feature>
<feature type="modified residue" description="4-hydroxyproline" evidence="5">
    <location>
        <position position="569"/>
    </location>
</feature>
<feature type="modified residue" description="4-hydroxyproline" evidence="5">
    <location>
        <position position="578"/>
    </location>
</feature>
<feature type="modified residue" description="5-hydroxylysine" evidence="5">
    <location>
        <position position="590"/>
    </location>
</feature>
<feature type="modified residue" description="4-hydroxyproline" evidence="5">
    <location>
        <position position="596"/>
    </location>
</feature>
<feature type="modified residue" description="4-hydroxyproline" evidence="8">
    <location>
        <position position="611"/>
    </location>
</feature>
<feature type="modified residue" description="4-hydroxyproline" evidence="8">
    <location>
        <position position="617"/>
    </location>
</feature>
<feature type="modified residue" description="Phosphoserine" evidence="4">
    <location>
        <position position="626"/>
    </location>
</feature>
<feature type="modified residue" description="4-hydroxyproline" evidence="5">
    <location>
        <position position="638"/>
    </location>
</feature>
<feature type="modified residue" description="4-hydroxyproline" evidence="5">
    <location>
        <position position="644"/>
    </location>
</feature>
<feature type="modified residue" description="4-hydroxyproline" evidence="5">
    <location>
        <position position="647"/>
    </location>
</feature>
<feature type="modified residue" description="4-hydroxyproline" evidence="5">
    <location>
        <position position="656"/>
    </location>
</feature>
<feature type="modified residue" description="4-hydroxyproline" evidence="5">
    <location>
        <position position="662"/>
    </location>
</feature>
<feature type="modified residue" description="4-hydroxyproline" evidence="5">
    <location>
        <position position="680"/>
    </location>
</feature>
<feature type="modified residue" description="4-hydroxyproline" evidence="5">
    <location>
        <position position="689"/>
    </location>
</feature>
<feature type="modified residue" description="4-hydroxyproline" evidence="5">
    <location>
        <position position="698"/>
    </location>
</feature>
<feature type="modified residue" description="5-hydroxylysine" evidence="5">
    <location>
        <position position="701"/>
    </location>
</feature>
<feature type="modified residue" description="4-hydroxyproline" evidence="8">
    <location>
        <position position="710"/>
    </location>
</feature>
<feature type="modified residue" description="4-hydroxyproline" evidence="8">
    <location>
        <position position="716"/>
    </location>
</feature>
<feature type="modified residue" description="3-hydroxyproline" evidence="6">
    <location>
        <position position="724"/>
    </location>
</feature>
<feature type="modified residue" description="4-hydroxyproline" evidence="6">
    <location>
        <position position="725"/>
    </location>
</feature>
<feature type="modified residue" description="4-hydroxyproline" evidence="6">
    <location>
        <position position="734"/>
    </location>
</feature>
<feature type="modified residue" description="4-hydroxyproline" evidence="6">
    <location>
        <position position="737"/>
    </location>
</feature>
<feature type="modified residue" description="4-hydroxyproline" evidence="8">
    <location>
        <position position="758"/>
    </location>
</feature>
<feature type="modified residue" description="4-hydroxyproline" evidence="8">
    <location>
        <position position="764"/>
    </location>
</feature>
<feature type="modified residue" description="4-hydroxyproline" evidence="8">
    <location>
        <position position="767"/>
    </location>
</feature>
<feature type="modified residue" description="4-hydroxyproline" evidence="5">
    <location>
        <position position="776"/>
    </location>
</feature>
<feature type="modified residue" description="4-hydroxyproline" evidence="5">
    <location>
        <position position="785"/>
    </location>
</feature>
<feature type="modified residue" description="4-hydroxyproline" evidence="5">
    <location>
        <position position="803"/>
    </location>
</feature>
<feature type="modified residue" description="4-hydroxyproline" evidence="8">
    <location>
        <position position="812"/>
    </location>
</feature>
<feature type="modified residue" description="4-hydroxyproline" evidence="8">
    <location>
        <position position="815"/>
    </location>
</feature>
<feature type="modified residue" description="4-hydroxyproline" evidence="5">
    <location>
        <position position="821"/>
    </location>
</feature>
<feature type="modified residue" description="4-hydroxyproline" evidence="5">
    <location>
        <position position="836"/>
    </location>
</feature>
<feature type="modified residue" description="4-hydroxyproline" evidence="5">
    <location>
        <position position="842"/>
    </location>
</feature>
<feature type="modified residue" description="4-hydroxyproline" evidence="5">
    <location>
        <position position="848"/>
    </location>
</feature>
<feature type="modified residue" description="4-hydroxyproline" evidence="5">
    <location>
        <position position="857"/>
    </location>
</feature>
<feature type="modified residue" description="4-hydroxyproline" evidence="8">
    <location>
        <position position="863"/>
    </location>
</feature>
<feature type="modified residue" description="4-hydroxyproline" evidence="8">
    <location>
        <position position="869"/>
    </location>
</feature>
<feature type="modified residue" description="5-hydroxylysine" evidence="5">
    <location>
        <position position="872"/>
    </location>
</feature>
<feature type="modified residue" description="4-hydroxyproline" evidence="5">
    <location>
        <position position="884"/>
    </location>
</feature>
<feature type="modified residue" description="4-hydroxyproline" evidence="8">
    <location>
        <position position="887"/>
    </location>
</feature>
<feature type="modified residue" description="4-hydroxyproline" evidence="8">
    <location>
        <position position="890"/>
    </location>
</feature>
<feature type="modified residue" description="5-hydroxylysine" evidence="5">
    <location>
        <position position="935"/>
    </location>
</feature>
<feature type="modified residue" description="5-hydroxylysine; alternate" evidence="6">
    <location>
        <position position="947"/>
    </location>
</feature>
<feature type="modified residue" description="4-hydroxyproline" evidence="8">
    <location>
        <position position="959"/>
    </location>
</feature>
<feature type="modified residue" description="4-hydroxyproline" evidence="8">
    <location>
        <position position="962"/>
    </location>
</feature>
<feature type="modified residue" description="4-hydroxyproline" evidence="8">
    <location>
        <position position="965"/>
    </location>
</feature>
<feature type="modified residue" description="4-hydroxyproline" evidence="5">
    <location>
        <position position="983"/>
    </location>
</feature>
<feature type="modified residue" description="4-hydroxyproline" evidence="8">
    <location>
        <position position="998"/>
    </location>
</feature>
<feature type="modified residue" description="4-hydroxyproline" evidence="8">
    <location>
        <position position="1001"/>
    </location>
</feature>
<feature type="modified residue" description="3-hydroxyproline" evidence="6">
    <location>
        <position position="1003"/>
    </location>
</feature>
<feature type="modified residue" description="4-hydroxyproline" evidence="8">
    <location>
        <position position="1004"/>
    </location>
</feature>
<feature type="modified residue" description="3-hydroxyproline" evidence="6">
    <location>
        <position position="1018"/>
    </location>
</feature>
<feature type="modified residue" description="4-hydroxyproline" evidence="6">
    <location>
        <position position="1019"/>
    </location>
</feature>
<feature type="modified residue" description="3-hydroxyproline" evidence="6">
    <location>
        <position position="1021"/>
    </location>
</feature>
<feature type="modified residue" description="4-hydroxyproline" evidence="6">
    <location>
        <position position="1022"/>
    </location>
</feature>
<feature type="modified residue" description="3-hydroxyproline" evidence="6">
    <location>
        <position position="1024"/>
    </location>
</feature>
<feature type="modified residue" description="4-hydroxyproline" evidence="6">
    <location>
        <position position="1025"/>
    </location>
</feature>
<feature type="modified residue" description="4-hydroxyproline" evidence="6">
    <location>
        <position position="1028"/>
    </location>
</feature>
<feature type="modified residue" description="4-hydroxyproline" evidence="6">
    <location>
        <position position="1031"/>
    </location>
</feature>
<feature type="modified residue" description="Allysine" evidence="2">
    <location>
        <position position="1047"/>
    </location>
</feature>
<feature type="glycosylation site" description="O-linked (Gal...) hydroxylysine; alternate" evidence="5">
    <location>
        <position position="104"/>
    </location>
</feature>
<feature type="glycosylation site" description="O-linked (Gal...) hydroxylysine; alternate" evidence="5">
    <location>
        <position position="947"/>
    </location>
</feature>
<feature type="unsure residue" description="L or I">
    <location>
        <position position="2"/>
    </location>
</feature>
<feature type="unsure residue" description="I or L">
    <location>
        <position position="14"/>
    </location>
</feature>
<feature type="unsure residue" description="L or I">
    <location>
        <position position="28"/>
    </location>
</feature>
<feature type="unsure residue" description="L or I">
    <location>
        <position position="94"/>
    </location>
</feature>
<feature type="unsure residue" description="L or I">
    <location>
        <position position="100"/>
    </location>
</feature>
<feature type="unsure residue" description="L or I">
    <location>
        <position position="112"/>
    </location>
</feature>
<feature type="unsure residue" description="A or S">
    <location>
        <position position="136"/>
    </location>
</feature>
<feature type="unsure residue" description="L or I">
    <location>
        <position position="145"/>
    </location>
</feature>
<feature type="unsure residue" description="P or I">
    <location>
        <position position="152"/>
    </location>
</feature>
<feature type="unsure residue" description="Q or E">
    <location>
        <position position="232"/>
    </location>
</feature>
<feature type="unsure residue" description="I or L">
    <location>
        <position position="244"/>
    </location>
</feature>
<feature type="unsure residue" description="A or S">
    <location>
        <position position="265"/>
    </location>
</feature>
<feature type="unsure residue" description="A or S">
    <location>
        <position position="286"/>
    </location>
</feature>
<feature type="unsure residue" description="I or L">
    <location>
        <position position="293"/>
    </location>
</feature>
<feature type="unsure residue" description="I or L">
    <location>
        <position position="295"/>
    </location>
</feature>
<feature type="unsure residue" description="A or S">
    <location>
        <position position="302"/>
    </location>
</feature>
<feature type="unsure residue" description="L or I">
    <location>
        <position position="319"/>
    </location>
</feature>
<feature type="unsure residue" description="P or L">
    <location>
        <position position="323"/>
    </location>
</feature>
<feature type="unsure residue" description="L or I">
    <location>
        <position position="373"/>
    </location>
</feature>
<feature type="unsure residue" description="L or I">
    <location>
        <position position="379"/>
    </location>
</feature>
<feature type="unsure residue" description="L or I">
    <location>
        <position position="484"/>
    </location>
</feature>
<feature type="unsure residue" description="L or I">
    <location>
        <position position="506"/>
    </location>
</feature>
<feature type="unsure residue" description="L or I">
    <location>
        <position position="565"/>
    </location>
</feature>
<feature type="unsure residue" description="L or I">
    <location>
        <position position="577"/>
    </location>
</feature>
<feature type="unsure residue" description="L or I">
    <location>
        <position position="604"/>
    </location>
</feature>
<feature type="unsure residue" description="I or L">
    <location>
        <position position="608"/>
    </location>
</feature>
<feature type="unsure residue" description="A or S">
    <location>
        <position position="614"/>
    </location>
</feature>
<feature type="unsure residue" description="A or G">
    <location>
        <position position="623"/>
    </location>
</feature>
<feature type="unsure residue" description="S or P">
    <location>
        <position position="626"/>
    </location>
</feature>
<feature type="unsure residue" description="A or S">
    <location>
        <position position="629"/>
    </location>
</feature>
<feature type="unsure residue" description="I or L">
    <location>
        <position position="692"/>
    </location>
</feature>
<feature type="unsure residue" description="I or L">
    <location>
        <position position="793"/>
    </location>
</feature>
<feature type="unsure residue" description="L or I">
    <location>
        <position position="802"/>
    </location>
</feature>
<feature type="unsure residue" description="L or I">
    <location>
        <position position="814"/>
    </location>
</feature>
<feature type="unsure residue" description="L or I">
    <location>
        <position position="844"/>
    </location>
</feature>
<feature type="unsure residue" description="A or S">
    <location>
        <position position="889"/>
    </location>
</feature>
<feature type="unsure residue" description="Q or P">
    <location>
        <position position="929"/>
    </location>
</feature>
<feature type="unsure residue" description="L or I">
    <location>
        <position position="946"/>
    </location>
</feature>
<feature type="unsure residue" description="S or T">
    <location>
        <position position="953"/>
    </location>
</feature>
<feature type="unsure residue" description="L or I">
    <location>
        <position position="955"/>
    </location>
</feature>
<feature type="unsure residue" description="L or I">
    <location>
        <position position="994"/>
    </location>
</feature>
<feature type="unsure residue" description="L or I">
    <location>
        <position position="997"/>
    </location>
</feature>
<feature type="unsure residue" description="P or I">
    <location>
        <position position="1001"/>
    </location>
</feature>
<feature type="unsure residue" description="L or I">
    <location>
        <position position="1040"/>
    </location>
</feature>
<feature type="sequence conflict" description="In Ref. 4; AA sequence." evidence="9" ref="4">
    <original>V</original>
    <variation>T</variation>
    <location>
        <position position="208"/>
    </location>
</feature>
<feature type="sequence conflict" description="In Ref. 2; AA sequence." evidence="9" ref="2">
    <original>A</original>
    <variation>S</variation>
    <location>
        <position position="257"/>
    </location>
</feature>
<feature type="sequence conflict" description="In Ref. 2; AA sequence." evidence="9" ref="2">
    <original>PGS</original>
    <variation>QGN</variation>
    <location>
        <begin position="278"/>
        <end position="280"/>
    </location>
</feature>
<feature type="sequence conflict" description="In Ref. 2; AA sequence." evidence="9" ref="2">
    <original>A</original>
    <variation>T</variation>
    <location>
        <position position="284"/>
    </location>
</feature>
<feature type="sequence conflict" description="In Ref. 2; AA sequence." evidence="9" ref="2">
    <original>I</original>
    <variation>V</variation>
    <location>
        <position position="293"/>
    </location>
</feature>
<feature type="sequence conflict" description="In Ref. 2; AA sequence." evidence="9" ref="2">
    <original>P</original>
    <variation>A</variation>
    <location>
        <position position="407"/>
    </location>
</feature>
<feature type="sequence conflict" description="In Ref. 2; AA sequence." evidence="9" ref="2">
    <original>A</original>
    <variation>T</variation>
    <location>
        <position position="427"/>
    </location>
</feature>
<feature type="sequence conflict" description="In Ref. 2; AA sequence." evidence="9" ref="2">
    <original>A</original>
    <variation>P</variation>
    <location>
        <position position="448"/>
    </location>
</feature>
<feature type="sequence conflict" description="In Ref. 2; AA sequence." evidence="9" ref="2">
    <original>A</original>
    <variation>T</variation>
    <location>
        <position position="551"/>
    </location>
</feature>
<feature type="sequence conflict" description="In Ref. 2; AA sequence." evidence="9" ref="2">
    <original>PGA</original>
    <variation>SGP</variation>
    <location>
        <begin position="698"/>
        <end position="700"/>
    </location>
</feature>
<feature type="sequence conflict" description="In Ref. 2; AA sequence." evidence="9" ref="2">
    <original>P</original>
    <variation>A</variation>
    <location>
        <position position="871"/>
    </location>
</feature>
<feature type="sequence conflict" description="In Ref. 2; AA sequence." evidence="9" ref="2">
    <original>S</original>
    <variation>A</variation>
    <location>
        <position position="881"/>
    </location>
</feature>
<accession>P0C2W8</accession>
<protein>
    <recommendedName>
        <fullName>Collagen alpha-1(I) chain</fullName>
    </recommendedName>
    <alternativeName>
        <fullName>Alpha-1 type I collagen</fullName>
    </alternativeName>
</protein>